<gene>
    <name type="primary">alr</name>
    <name type="ordered locus">SbBS512_E4542</name>
</gene>
<accession>B2TX62</accession>
<proteinExistence type="inferred from homology"/>
<feature type="chain" id="PRO_1000138621" description="Alanine racemase">
    <location>
        <begin position="1"/>
        <end position="359"/>
    </location>
</feature>
<feature type="active site" description="Proton acceptor; specific for D-alanine" evidence="1">
    <location>
        <position position="34"/>
    </location>
</feature>
<feature type="active site" description="Proton acceptor; specific for L-alanine" evidence="1">
    <location>
        <position position="255"/>
    </location>
</feature>
<feature type="binding site" evidence="1">
    <location>
        <position position="129"/>
    </location>
    <ligand>
        <name>substrate</name>
    </ligand>
</feature>
<feature type="binding site" evidence="1">
    <location>
        <position position="303"/>
    </location>
    <ligand>
        <name>substrate</name>
    </ligand>
</feature>
<feature type="modified residue" description="N6-(pyridoxal phosphate)lysine" evidence="1">
    <location>
        <position position="34"/>
    </location>
</feature>
<name>ALR_SHIB3</name>
<organism>
    <name type="scientific">Shigella boydii serotype 18 (strain CDC 3083-94 / BS512)</name>
    <dbReference type="NCBI Taxonomy" id="344609"/>
    <lineage>
        <taxon>Bacteria</taxon>
        <taxon>Pseudomonadati</taxon>
        <taxon>Pseudomonadota</taxon>
        <taxon>Gammaproteobacteria</taxon>
        <taxon>Enterobacterales</taxon>
        <taxon>Enterobacteriaceae</taxon>
        <taxon>Shigella</taxon>
    </lineage>
</organism>
<reference key="1">
    <citation type="submission" date="2008-05" db="EMBL/GenBank/DDBJ databases">
        <title>Complete sequence of Shigella boydii serotype 18 strain BS512.</title>
        <authorList>
            <person name="Rasko D.A."/>
            <person name="Rosovitz M."/>
            <person name="Maurelli A.T."/>
            <person name="Myers G."/>
            <person name="Seshadri R."/>
            <person name="Cer R."/>
            <person name="Jiang L."/>
            <person name="Ravel J."/>
            <person name="Sebastian Y."/>
        </authorList>
    </citation>
    <scope>NUCLEOTIDE SEQUENCE [LARGE SCALE GENOMIC DNA]</scope>
    <source>
        <strain>CDC 3083-94 / BS512</strain>
    </source>
</reference>
<dbReference type="EC" id="5.1.1.1" evidence="1"/>
<dbReference type="EMBL" id="CP001063">
    <property type="protein sequence ID" value="ACD08785.1"/>
    <property type="molecule type" value="Genomic_DNA"/>
</dbReference>
<dbReference type="RefSeq" id="WP_001147344.1">
    <property type="nucleotide sequence ID" value="NC_010658.1"/>
</dbReference>
<dbReference type="SMR" id="B2TX62"/>
<dbReference type="STRING" id="344609.SbBS512_E4542"/>
<dbReference type="KEGG" id="sbc:SbBS512_E4542"/>
<dbReference type="HOGENOM" id="CLU_028393_1_0_6"/>
<dbReference type="UniPathway" id="UPA00042">
    <property type="reaction ID" value="UER00497"/>
</dbReference>
<dbReference type="Proteomes" id="UP000001030">
    <property type="component" value="Chromosome"/>
</dbReference>
<dbReference type="GO" id="GO:0005829">
    <property type="term" value="C:cytosol"/>
    <property type="evidence" value="ECO:0007669"/>
    <property type="project" value="TreeGrafter"/>
</dbReference>
<dbReference type="GO" id="GO:0008784">
    <property type="term" value="F:alanine racemase activity"/>
    <property type="evidence" value="ECO:0007669"/>
    <property type="project" value="UniProtKB-UniRule"/>
</dbReference>
<dbReference type="GO" id="GO:0030170">
    <property type="term" value="F:pyridoxal phosphate binding"/>
    <property type="evidence" value="ECO:0007669"/>
    <property type="project" value="UniProtKB-UniRule"/>
</dbReference>
<dbReference type="GO" id="GO:0030632">
    <property type="term" value="P:D-alanine biosynthetic process"/>
    <property type="evidence" value="ECO:0007669"/>
    <property type="project" value="UniProtKB-UniRule"/>
</dbReference>
<dbReference type="CDD" id="cd06827">
    <property type="entry name" value="PLPDE_III_AR_proteobact"/>
    <property type="match status" value="1"/>
</dbReference>
<dbReference type="FunFam" id="2.40.37.10:FF:000002">
    <property type="entry name" value="Alanine racemase"/>
    <property type="match status" value="1"/>
</dbReference>
<dbReference type="FunFam" id="3.20.20.10:FF:000002">
    <property type="entry name" value="Alanine racemase"/>
    <property type="match status" value="1"/>
</dbReference>
<dbReference type="Gene3D" id="3.20.20.10">
    <property type="entry name" value="Alanine racemase"/>
    <property type="match status" value="1"/>
</dbReference>
<dbReference type="Gene3D" id="2.40.37.10">
    <property type="entry name" value="Lyase, Ornithine Decarboxylase, Chain A, domain 1"/>
    <property type="match status" value="1"/>
</dbReference>
<dbReference type="HAMAP" id="MF_01201">
    <property type="entry name" value="Ala_racemase"/>
    <property type="match status" value="1"/>
</dbReference>
<dbReference type="InterPro" id="IPR000821">
    <property type="entry name" value="Ala_racemase"/>
</dbReference>
<dbReference type="InterPro" id="IPR009006">
    <property type="entry name" value="Ala_racemase/Decarboxylase_C"/>
</dbReference>
<dbReference type="InterPro" id="IPR011079">
    <property type="entry name" value="Ala_racemase_C"/>
</dbReference>
<dbReference type="InterPro" id="IPR001608">
    <property type="entry name" value="Ala_racemase_N"/>
</dbReference>
<dbReference type="InterPro" id="IPR020622">
    <property type="entry name" value="Ala_racemase_pyridoxalP-BS"/>
</dbReference>
<dbReference type="InterPro" id="IPR029066">
    <property type="entry name" value="PLP-binding_barrel"/>
</dbReference>
<dbReference type="NCBIfam" id="TIGR00492">
    <property type="entry name" value="alr"/>
    <property type="match status" value="1"/>
</dbReference>
<dbReference type="PANTHER" id="PTHR30511">
    <property type="entry name" value="ALANINE RACEMASE"/>
    <property type="match status" value="1"/>
</dbReference>
<dbReference type="PANTHER" id="PTHR30511:SF4">
    <property type="entry name" value="ALANINE RACEMASE, BIOSYNTHETIC"/>
    <property type="match status" value="1"/>
</dbReference>
<dbReference type="Pfam" id="PF00842">
    <property type="entry name" value="Ala_racemase_C"/>
    <property type="match status" value="1"/>
</dbReference>
<dbReference type="Pfam" id="PF01168">
    <property type="entry name" value="Ala_racemase_N"/>
    <property type="match status" value="1"/>
</dbReference>
<dbReference type="PRINTS" id="PR00992">
    <property type="entry name" value="ALARACEMASE"/>
</dbReference>
<dbReference type="SMART" id="SM01005">
    <property type="entry name" value="Ala_racemase_C"/>
    <property type="match status" value="1"/>
</dbReference>
<dbReference type="SUPFAM" id="SSF50621">
    <property type="entry name" value="Alanine racemase C-terminal domain-like"/>
    <property type="match status" value="1"/>
</dbReference>
<dbReference type="SUPFAM" id="SSF51419">
    <property type="entry name" value="PLP-binding barrel"/>
    <property type="match status" value="1"/>
</dbReference>
<dbReference type="PROSITE" id="PS00395">
    <property type="entry name" value="ALANINE_RACEMASE"/>
    <property type="match status" value="1"/>
</dbReference>
<comment type="function">
    <text evidence="1">Catalyzes the interconversion of L-alanine and D-alanine. May also act on other amino acids.</text>
</comment>
<comment type="catalytic activity">
    <reaction evidence="1">
        <text>L-alanine = D-alanine</text>
        <dbReference type="Rhea" id="RHEA:20249"/>
        <dbReference type="ChEBI" id="CHEBI:57416"/>
        <dbReference type="ChEBI" id="CHEBI:57972"/>
        <dbReference type="EC" id="5.1.1.1"/>
    </reaction>
</comment>
<comment type="cofactor">
    <cofactor evidence="1">
        <name>pyridoxal 5'-phosphate</name>
        <dbReference type="ChEBI" id="CHEBI:597326"/>
    </cofactor>
</comment>
<comment type="pathway">
    <text evidence="1">Amino-acid biosynthesis; D-alanine biosynthesis; D-alanine from L-alanine: step 1/1.</text>
</comment>
<comment type="similarity">
    <text evidence="1">Belongs to the alanine racemase family.</text>
</comment>
<protein>
    <recommendedName>
        <fullName evidence="1">Alanine racemase</fullName>
        <ecNumber evidence="1">5.1.1.1</ecNumber>
    </recommendedName>
</protein>
<keyword id="KW-0413">Isomerase</keyword>
<keyword id="KW-0663">Pyridoxal phosphate</keyword>
<keyword id="KW-1185">Reference proteome</keyword>
<evidence type="ECO:0000255" key="1">
    <source>
        <dbReference type="HAMAP-Rule" id="MF_01201"/>
    </source>
</evidence>
<sequence>MQAATVVINRRALRHNLQRLRELAPASKMVAVVKANAYGHGLLETARTLPDADAFGVARLEEALRLRAGGITKPVLLLEGFFDARDLPTISAQHFHTAVHNEEQLAALEEASLDEPVTVWMKLDTGMHRLGVRPEQAGAFYHRLTQCKNVRQPVNIVSHFARADEPKCGATEKQLAIFNTFCEGKPGQRSIAASGGILLWPQSHFDWVRPGIILYGVSPLEDRSTGADFGCQPVMSLTSSLIAVREHKAGEPVGYGGTWVSERDTRLGVVAMGYGDGYPRAAPSGTPVLVNGREVPIVGRVAMDMICVDLGPQAQDKAGDPVILWGEGLPVERIAEMTKVSAYELITRLTSRVAMKYVD</sequence>